<gene>
    <name type="ordered locus">RT0041</name>
</gene>
<comment type="function">
    <text evidence="1">Could be part of an ABC transporter complex.</text>
</comment>
<comment type="subcellular location">
    <subcellularLocation>
        <location evidence="1">Cell inner membrane</location>
        <topology evidence="1">Multi-pass membrane protein</topology>
    </subcellularLocation>
</comment>
<comment type="similarity">
    <text evidence="3">Belongs to the MlaE permease family.</text>
</comment>
<reference key="1">
    <citation type="journal article" date="2004" name="J. Bacteriol.">
        <title>Complete genome sequence of Rickettsia typhi and comparison with sequences of other Rickettsiae.</title>
        <authorList>
            <person name="McLeod M.P."/>
            <person name="Qin X."/>
            <person name="Karpathy S.E."/>
            <person name="Gioia J."/>
            <person name="Highlander S.K."/>
            <person name="Fox G.E."/>
            <person name="McNeill T.Z."/>
            <person name="Jiang H."/>
            <person name="Muzny D."/>
            <person name="Jacob L.S."/>
            <person name="Hawes A.C."/>
            <person name="Sodergren E."/>
            <person name="Gill R."/>
            <person name="Hume J."/>
            <person name="Morgan M."/>
            <person name="Fan G."/>
            <person name="Amin A.G."/>
            <person name="Gibbs R.A."/>
            <person name="Hong C."/>
            <person name="Yu X.-J."/>
            <person name="Walker D.H."/>
            <person name="Weinstock G.M."/>
        </authorList>
    </citation>
    <scope>NUCLEOTIDE SEQUENCE [LARGE SCALE GENOMIC DNA]</scope>
    <source>
        <strain>ATCC VR-144 / Wilmington</strain>
    </source>
</reference>
<keyword id="KW-0997">Cell inner membrane</keyword>
<keyword id="KW-1003">Cell membrane</keyword>
<keyword id="KW-0472">Membrane</keyword>
<keyword id="KW-0812">Transmembrane</keyword>
<keyword id="KW-1133">Transmembrane helix</keyword>
<keyword id="KW-0813">Transport</keyword>
<sequence>MLLNIANLVGKHTIKFAQSVGIFALFSFIAISSIIKPPLYLSLIMRQLLFIGFHSLPVVAMTTFFSGAVLALQSYTGFSRFSAENSIATVVVLSLTRELGPVLAGLIVAGRVGASIAAEIATMKVTEQVDALYTLSTDPIKYLVCPRVIAAIITMPCLVLIGDVIGVMGGYLVGIYKLNFNSTAYLTSTFQYLELIDVISGLVKATVFGFIISIISCYSGYYSGKGAKGVGRATTSAVVNSSILILISNYLITELLFKV</sequence>
<name>Y041_RICTY</name>
<proteinExistence type="inferred from homology"/>
<organism>
    <name type="scientific">Rickettsia typhi (strain ATCC VR-144 / Wilmington)</name>
    <dbReference type="NCBI Taxonomy" id="257363"/>
    <lineage>
        <taxon>Bacteria</taxon>
        <taxon>Pseudomonadati</taxon>
        <taxon>Pseudomonadota</taxon>
        <taxon>Alphaproteobacteria</taxon>
        <taxon>Rickettsiales</taxon>
        <taxon>Rickettsiaceae</taxon>
        <taxon>Rickettsieae</taxon>
        <taxon>Rickettsia</taxon>
        <taxon>typhus group</taxon>
    </lineage>
</organism>
<feature type="chain" id="PRO_0000272625" description="Probable ABC transporter permease protein RT0041">
    <location>
        <begin position="1"/>
        <end position="259"/>
    </location>
</feature>
<feature type="transmembrane region" description="Helical" evidence="2">
    <location>
        <begin position="20"/>
        <end position="40"/>
    </location>
</feature>
<feature type="transmembrane region" description="Helical" evidence="2">
    <location>
        <begin position="49"/>
        <end position="69"/>
    </location>
</feature>
<feature type="transmembrane region" description="Helical" evidence="2">
    <location>
        <begin position="148"/>
        <end position="168"/>
    </location>
</feature>
<feature type="transmembrane region" description="Helical" evidence="2">
    <location>
        <begin position="195"/>
        <end position="215"/>
    </location>
</feature>
<feature type="transmembrane region" description="Helical" evidence="2">
    <location>
        <begin position="237"/>
        <end position="257"/>
    </location>
</feature>
<evidence type="ECO:0000250" key="1"/>
<evidence type="ECO:0000255" key="2"/>
<evidence type="ECO:0000305" key="3"/>
<accession>Q68XW4</accession>
<protein>
    <recommendedName>
        <fullName>Probable ABC transporter permease protein RT0041</fullName>
    </recommendedName>
</protein>
<dbReference type="EMBL" id="AE017197">
    <property type="protein sequence ID" value="AAU03528.1"/>
    <property type="molecule type" value="Genomic_DNA"/>
</dbReference>
<dbReference type="RefSeq" id="WP_011190515.1">
    <property type="nucleotide sequence ID" value="NC_006142.1"/>
</dbReference>
<dbReference type="SMR" id="Q68XW4"/>
<dbReference type="KEGG" id="rty:RT0041"/>
<dbReference type="eggNOG" id="COG0767">
    <property type="taxonomic scope" value="Bacteria"/>
</dbReference>
<dbReference type="HOGENOM" id="CLU_045686_1_1_5"/>
<dbReference type="OrthoDB" id="9806241at2"/>
<dbReference type="Proteomes" id="UP000000604">
    <property type="component" value="Chromosome"/>
</dbReference>
<dbReference type="GO" id="GO:0043190">
    <property type="term" value="C:ATP-binding cassette (ABC) transporter complex"/>
    <property type="evidence" value="ECO:0007669"/>
    <property type="project" value="InterPro"/>
</dbReference>
<dbReference type="GO" id="GO:0005548">
    <property type="term" value="F:phospholipid transporter activity"/>
    <property type="evidence" value="ECO:0007669"/>
    <property type="project" value="TreeGrafter"/>
</dbReference>
<dbReference type="InterPro" id="IPR003453">
    <property type="entry name" value="ABC_MlaE_roteobac"/>
</dbReference>
<dbReference type="InterPro" id="IPR030802">
    <property type="entry name" value="Permease_MalE"/>
</dbReference>
<dbReference type="NCBIfam" id="TIGR00056">
    <property type="entry name" value="MlaE family lipid ABC transporter permease subunit"/>
    <property type="match status" value="1"/>
</dbReference>
<dbReference type="PANTHER" id="PTHR30188">
    <property type="entry name" value="ABC TRANSPORTER PERMEASE PROTEIN-RELATED"/>
    <property type="match status" value="1"/>
</dbReference>
<dbReference type="PANTHER" id="PTHR30188:SF4">
    <property type="entry name" value="PROTEIN TRIGALACTOSYLDIACYLGLYCEROL 1, CHLOROPLASTIC"/>
    <property type="match status" value="1"/>
</dbReference>
<dbReference type="Pfam" id="PF02405">
    <property type="entry name" value="MlaE"/>
    <property type="match status" value="1"/>
</dbReference>